<organismHost>
    <name type="scientific">Cucumis sativus</name>
    <name type="common">Cucumber</name>
    <dbReference type="NCBI Taxonomy" id="3659"/>
</organismHost>
<organismHost>
    <name type="scientific">Solanum lycopersicum</name>
    <name type="common">Tomato</name>
    <name type="synonym">Lycopersicon esculentum</name>
    <dbReference type="NCBI Taxonomy" id="4081"/>
</organismHost>
<organismHost>
    <name type="scientific">Spinacia oleracea</name>
    <name type="common">Spinach</name>
    <dbReference type="NCBI Taxonomy" id="3562"/>
</organismHost>
<name>MVP_CMVFT</name>
<comment type="function">
    <text evidence="1">Transports viral genome to neighboring plant cells directly through plasmosdesmata, without any budding. The movement protein allows efficient cell to cell propagation, by bypassing the host cell wall barrier. Acts by forming a tubular structure at the host plasmodesmata, enlarging it enough to allow free passage of virion capsids (By similarity).</text>
</comment>
<comment type="subcellular location">
    <subcellularLocation>
        <location evidence="1">Host cell junction</location>
        <location evidence="1">Host plasmodesma</location>
    </subcellularLocation>
    <text evidence="1">Assembles into long tubular structures at the surface of the infected protoplast.</text>
</comment>
<comment type="similarity">
    <text evidence="3">Belongs to the cucumovirus movement protein family.</text>
</comment>
<dbReference type="EMBL" id="D28487">
    <property type="protein sequence ID" value="BAA05846.1"/>
    <property type="molecule type" value="Genomic_RNA"/>
</dbReference>
<dbReference type="GO" id="GO:0044219">
    <property type="term" value="C:host cell plasmodesma"/>
    <property type="evidence" value="ECO:0007669"/>
    <property type="project" value="UniProtKB-SubCell"/>
</dbReference>
<dbReference type="GO" id="GO:0046740">
    <property type="term" value="P:transport of virus in host, cell to cell"/>
    <property type="evidence" value="ECO:0007669"/>
    <property type="project" value="UniProtKB-KW"/>
</dbReference>
<dbReference type="InterPro" id="IPR000603">
    <property type="entry name" value="MPV"/>
</dbReference>
<dbReference type="Pfam" id="PF00803">
    <property type="entry name" value="3A"/>
    <property type="match status" value="1"/>
</dbReference>
<reference key="1">
    <citation type="journal article" date="1996" name="Nihon Shokubutsu Byori Gakkaiho">
        <title>Six new subgroup I members of Japanese cucumber mosaic virus as determined by nucleotide sequence analysis on RNA3's cDNAs.</title>
        <authorList>
            <person name="Chaumpluk P."/>
            <person name="Sasaki Y."/>
            <person name="Nakajima N."/>
            <person name="Nagano H."/>
            <person name="Nakamura I."/>
            <person name="Suzuki K."/>
            <person name="Mise K."/>
            <person name="Inouye N."/>
            <person name="Okuno T."/>
            <person name="Furusawa I."/>
        </authorList>
    </citation>
    <scope>NUCLEOTIDE SEQUENCE [GENOMIC RNA]</scope>
</reference>
<protein>
    <recommendedName>
        <fullName>Movement protein</fullName>
        <shortName>MP</shortName>
    </recommendedName>
    <alternativeName>
        <fullName>Protein 3A</fullName>
    </alternativeName>
</protein>
<feature type="chain" id="PRO_0000083237" description="Movement protein">
    <location>
        <begin position="1"/>
        <end position="279"/>
    </location>
</feature>
<feature type="region of interest" description="Disordered" evidence="2">
    <location>
        <begin position="247"/>
        <end position="279"/>
    </location>
</feature>
<feature type="compositionally biased region" description="Low complexity" evidence="2">
    <location>
        <begin position="254"/>
        <end position="268"/>
    </location>
</feature>
<sequence>MAFQGTSRTLTQQSSADTSDDLQKILFSPEAIKKMATECDLGRHHWMRADNAISVRPLVPEVTHGRIASFFKSGYDVGELCSKGYMSVPQVLCAVTRTVSTDAEGSLRIYLADLGDKELSPIDGQCVSLHNHDLPALVSFQPTYDCPMETVGNRKRCFAVVIERHGYIGYTGTTASVCSNWQARFSSKNNNYTHIAAGKTLVLPFNRLAEQTKPSAVARLLKSQLNNIESSQYLLTNVKINQNARSESEELNVESPPAAIGSSSASRSEAFRPQVVNGL</sequence>
<evidence type="ECO:0000250" key="1"/>
<evidence type="ECO:0000256" key="2">
    <source>
        <dbReference type="SAM" id="MobiDB-lite"/>
    </source>
</evidence>
<evidence type="ECO:0000305" key="3"/>
<organism>
    <name type="scientific">Cucumber mosaic virus (strain FT)</name>
    <name type="common">CMV</name>
    <dbReference type="NCBI Taxonomy" id="117112"/>
    <lineage>
        <taxon>Viruses</taxon>
        <taxon>Riboviria</taxon>
        <taxon>Orthornavirae</taxon>
        <taxon>Kitrinoviricota</taxon>
        <taxon>Alsuviricetes</taxon>
        <taxon>Martellivirales</taxon>
        <taxon>Bromoviridae</taxon>
        <taxon>Cucumovirus</taxon>
        <taxon>Cucumber mosaic virus</taxon>
    </lineage>
</organism>
<keyword id="KW-1031">Host cell junction</keyword>
<keyword id="KW-0813">Transport</keyword>
<keyword id="KW-0916">Viral movement protein</keyword>
<gene>
    <name type="ORF">ORF3a</name>
</gene>
<accession>Q66139</accession>
<proteinExistence type="inferred from homology"/>